<gene>
    <name evidence="1" type="primary">mtnC</name>
    <name type="ordered locus">PMT_0184</name>
</gene>
<name>MTNC_PROMM</name>
<comment type="function">
    <text evidence="1">Bifunctional enzyme that catalyzes the enolization of 2,3-diketo-5-methylthiopentyl-1-phosphate (DK-MTP-1-P) into the intermediate 2-hydroxy-3-keto-5-methylthiopentenyl-1-phosphate (HK-MTPenyl-1-P), which is then dephosphorylated to form the acireductone 1,2-dihydroxy-3-keto-5-methylthiopentene (DHK-MTPene).</text>
</comment>
<comment type="catalytic activity">
    <reaction evidence="1">
        <text>5-methylsulfanyl-2,3-dioxopentyl phosphate + H2O = 1,2-dihydroxy-5-(methylsulfanyl)pent-1-en-3-one + phosphate</text>
        <dbReference type="Rhea" id="RHEA:21700"/>
        <dbReference type="ChEBI" id="CHEBI:15377"/>
        <dbReference type="ChEBI" id="CHEBI:43474"/>
        <dbReference type="ChEBI" id="CHEBI:49252"/>
        <dbReference type="ChEBI" id="CHEBI:58828"/>
        <dbReference type="EC" id="3.1.3.77"/>
    </reaction>
</comment>
<comment type="cofactor">
    <cofactor evidence="1">
        <name>Mg(2+)</name>
        <dbReference type="ChEBI" id="CHEBI:18420"/>
    </cofactor>
    <text evidence="1">Binds 1 Mg(2+) ion per subunit.</text>
</comment>
<comment type="pathway">
    <text evidence="1">Amino-acid biosynthesis; L-methionine biosynthesis via salvage pathway; L-methionine from S-methyl-5-thio-alpha-D-ribose 1-phosphate: step 3/6.</text>
</comment>
<comment type="pathway">
    <text evidence="1">Amino-acid biosynthesis; L-methionine biosynthesis via salvage pathway; L-methionine from S-methyl-5-thio-alpha-D-ribose 1-phosphate: step 4/6.</text>
</comment>
<comment type="subunit">
    <text evidence="1">Monomer.</text>
</comment>
<comment type="similarity">
    <text evidence="1">Belongs to the HAD-like hydrolase superfamily. MasA/MtnC family.</text>
</comment>
<feature type="chain" id="PRO_0000357386" description="Enolase-phosphatase E1">
    <location>
        <begin position="1"/>
        <end position="245"/>
    </location>
</feature>
<reference key="1">
    <citation type="journal article" date="2003" name="Nature">
        <title>Genome divergence in two Prochlorococcus ecotypes reflects oceanic niche differentiation.</title>
        <authorList>
            <person name="Rocap G."/>
            <person name="Larimer F.W."/>
            <person name="Lamerdin J.E."/>
            <person name="Malfatti S."/>
            <person name="Chain P."/>
            <person name="Ahlgren N.A."/>
            <person name="Arellano A."/>
            <person name="Coleman M."/>
            <person name="Hauser L."/>
            <person name="Hess W.R."/>
            <person name="Johnson Z.I."/>
            <person name="Land M.L."/>
            <person name="Lindell D."/>
            <person name="Post A.F."/>
            <person name="Regala W."/>
            <person name="Shah M."/>
            <person name="Shaw S.L."/>
            <person name="Steglich C."/>
            <person name="Sullivan M.B."/>
            <person name="Ting C.S."/>
            <person name="Tolonen A."/>
            <person name="Webb E.A."/>
            <person name="Zinser E.R."/>
            <person name="Chisholm S.W."/>
        </authorList>
    </citation>
    <scope>NUCLEOTIDE SEQUENCE [LARGE SCALE GENOMIC DNA]</scope>
    <source>
        <strain>MIT 9313</strain>
    </source>
</reference>
<proteinExistence type="inferred from homology"/>
<sequence>MITHILLDIEGTTCPTSFVSDTLFPYADTHLEGFLNEHIENNEVQSLIDEAWHEWQADEDPSSKDLLSKAFRENSSEIENICSYLHHLITIDRKSSALKDLQGRIWREGYEKGDISSSLYPETIEVLNKLKQQDYILAVYSSGSISAQKLLYRHTTNGDQTALFSHWFDTRTGNKKESKSYSDISIAMNIPVEKVMFVSDSCAECNAAKKAGMSVLFSLREGNPEQDPHDHQPIKDLRCLFDYLL</sequence>
<dbReference type="EC" id="3.1.3.77" evidence="1"/>
<dbReference type="EMBL" id="BX548175">
    <property type="protein sequence ID" value="CAE20359.1"/>
    <property type="molecule type" value="Genomic_DNA"/>
</dbReference>
<dbReference type="SMR" id="Q7V8Y7"/>
<dbReference type="KEGG" id="pmt:PMT_0184"/>
<dbReference type="eggNOG" id="COG4229">
    <property type="taxonomic scope" value="Bacteria"/>
</dbReference>
<dbReference type="HOGENOM" id="CLU_023273_0_0_3"/>
<dbReference type="OrthoDB" id="9797416at2"/>
<dbReference type="UniPathway" id="UPA00904">
    <property type="reaction ID" value="UER00876"/>
</dbReference>
<dbReference type="UniPathway" id="UPA00904">
    <property type="reaction ID" value="UER00877"/>
</dbReference>
<dbReference type="Proteomes" id="UP000001423">
    <property type="component" value="Chromosome"/>
</dbReference>
<dbReference type="GO" id="GO:0043715">
    <property type="term" value="F:2,3-diketo-5-methylthiopentyl-1-phosphate enolase activity"/>
    <property type="evidence" value="ECO:0007669"/>
    <property type="project" value="UniProtKB-UniRule"/>
</dbReference>
<dbReference type="GO" id="GO:0043716">
    <property type="term" value="F:2-hydroxy-3-keto-5-methylthiopentenyl-1-phosphate phosphatase activity"/>
    <property type="evidence" value="ECO:0007669"/>
    <property type="project" value="UniProtKB-UniRule"/>
</dbReference>
<dbReference type="GO" id="GO:0043874">
    <property type="term" value="F:acireductone synthase activity"/>
    <property type="evidence" value="ECO:0007669"/>
    <property type="project" value="UniProtKB-EC"/>
</dbReference>
<dbReference type="GO" id="GO:0000287">
    <property type="term" value="F:magnesium ion binding"/>
    <property type="evidence" value="ECO:0007669"/>
    <property type="project" value="UniProtKB-UniRule"/>
</dbReference>
<dbReference type="GO" id="GO:0019509">
    <property type="term" value="P:L-methionine salvage from methylthioadenosine"/>
    <property type="evidence" value="ECO:0007669"/>
    <property type="project" value="UniProtKB-UniRule"/>
</dbReference>
<dbReference type="CDD" id="cd01629">
    <property type="entry name" value="HAD_EP"/>
    <property type="match status" value="1"/>
</dbReference>
<dbReference type="Gene3D" id="1.10.720.60">
    <property type="match status" value="1"/>
</dbReference>
<dbReference type="Gene3D" id="3.40.50.1000">
    <property type="entry name" value="HAD superfamily/HAD-like"/>
    <property type="match status" value="1"/>
</dbReference>
<dbReference type="HAMAP" id="MF_01681">
    <property type="entry name" value="Salvage_MtnC"/>
    <property type="match status" value="1"/>
</dbReference>
<dbReference type="InterPro" id="IPR023943">
    <property type="entry name" value="Enolase-ppase_E1"/>
</dbReference>
<dbReference type="InterPro" id="IPR036412">
    <property type="entry name" value="HAD-like_sf"/>
</dbReference>
<dbReference type="InterPro" id="IPR023214">
    <property type="entry name" value="HAD_sf"/>
</dbReference>
<dbReference type="NCBIfam" id="TIGR01691">
    <property type="entry name" value="enolase-ppase"/>
    <property type="match status" value="1"/>
</dbReference>
<dbReference type="PANTHER" id="PTHR20371">
    <property type="entry name" value="ENOLASE-PHOSPHATASE E1"/>
    <property type="match status" value="1"/>
</dbReference>
<dbReference type="PANTHER" id="PTHR20371:SF1">
    <property type="entry name" value="ENOLASE-PHOSPHATASE E1"/>
    <property type="match status" value="1"/>
</dbReference>
<dbReference type="Pfam" id="PF00702">
    <property type="entry name" value="Hydrolase"/>
    <property type="match status" value="1"/>
</dbReference>
<dbReference type="SFLD" id="SFLDF00044">
    <property type="entry name" value="enolase-phosphatase"/>
    <property type="match status" value="1"/>
</dbReference>
<dbReference type="SFLD" id="SFLDS00003">
    <property type="entry name" value="Haloacid_Dehalogenase"/>
    <property type="match status" value="1"/>
</dbReference>
<dbReference type="SUPFAM" id="SSF56784">
    <property type="entry name" value="HAD-like"/>
    <property type="match status" value="1"/>
</dbReference>
<evidence type="ECO:0000255" key="1">
    <source>
        <dbReference type="HAMAP-Rule" id="MF_01681"/>
    </source>
</evidence>
<organism>
    <name type="scientific">Prochlorococcus marinus (strain MIT 9313)</name>
    <dbReference type="NCBI Taxonomy" id="74547"/>
    <lineage>
        <taxon>Bacteria</taxon>
        <taxon>Bacillati</taxon>
        <taxon>Cyanobacteriota</taxon>
        <taxon>Cyanophyceae</taxon>
        <taxon>Synechococcales</taxon>
        <taxon>Prochlorococcaceae</taxon>
        <taxon>Prochlorococcus</taxon>
    </lineage>
</organism>
<keyword id="KW-0028">Amino-acid biosynthesis</keyword>
<keyword id="KW-0378">Hydrolase</keyword>
<keyword id="KW-0460">Magnesium</keyword>
<keyword id="KW-0479">Metal-binding</keyword>
<keyword id="KW-0486">Methionine biosynthesis</keyword>
<keyword id="KW-1185">Reference proteome</keyword>
<protein>
    <recommendedName>
        <fullName evidence="1">Enolase-phosphatase E1</fullName>
        <ecNumber evidence="1">3.1.3.77</ecNumber>
    </recommendedName>
    <alternativeName>
        <fullName evidence="1">2,3-diketo-5-methylthio-1-phosphopentane phosphatase</fullName>
    </alternativeName>
</protein>
<accession>Q7V8Y7</accession>